<evidence type="ECO:0000256" key="1">
    <source>
        <dbReference type="SAM" id="MobiDB-lite"/>
    </source>
</evidence>
<evidence type="ECO:0000305" key="2"/>
<evidence type="ECO:0000305" key="3">
    <source ref="2"/>
</evidence>
<gene>
    <name type="primary">RPL41</name>
</gene>
<reference key="1">
    <citation type="submission" date="1998-02" db="EMBL/GenBank/DDBJ databases">
        <title>Primary structure of mRNA encoding a ribosomal protein L41.</title>
        <authorList>
            <person name="Woo H.-H."/>
        </authorList>
    </citation>
    <scope>NUCLEOTIDE SEQUENCE [MRNA]</scope>
    <source>
        <strain>cv. Essex</strain>
        <tissue>Root</tissue>
    </source>
</reference>
<reference key="2">
    <citation type="unpublished observations" date="2023-10">
        <authorList>
            <person name="Leibundgut M.A."/>
            <person name="Ban N."/>
        </authorList>
    </citation>
    <scope>REVISION OF SUBUNIT</scope>
    <scope>NOMENCLATURE</scope>
</reference>
<sequence>MGGVGKTKRMRRLKRKRRKMRQRSK</sequence>
<dbReference type="EMBL" id="AF047051">
    <property type="protein sequence ID" value="AAC03557.1"/>
    <property type="molecule type" value="mRNA"/>
</dbReference>
<dbReference type="PIR" id="T06233">
    <property type="entry name" value="T06233"/>
</dbReference>
<dbReference type="SMR" id="O49224"/>
<dbReference type="STRING" id="3847.O49224"/>
<dbReference type="InParanoid" id="O49224"/>
<dbReference type="Proteomes" id="UP000008827">
    <property type="component" value="Unplaced"/>
</dbReference>
<dbReference type="GO" id="GO:1990904">
    <property type="term" value="C:ribonucleoprotein complex"/>
    <property type="evidence" value="ECO:0007669"/>
    <property type="project" value="UniProtKB-KW"/>
</dbReference>
<dbReference type="GO" id="GO:0005840">
    <property type="term" value="C:ribosome"/>
    <property type="evidence" value="ECO:0007669"/>
    <property type="project" value="UniProtKB-KW"/>
</dbReference>
<dbReference type="GO" id="GO:0003735">
    <property type="term" value="F:structural constituent of ribosome"/>
    <property type="evidence" value="ECO:0007669"/>
    <property type="project" value="InterPro"/>
</dbReference>
<dbReference type="GO" id="GO:0006412">
    <property type="term" value="P:translation"/>
    <property type="evidence" value="ECO:0007669"/>
    <property type="project" value="InterPro"/>
</dbReference>
<dbReference type="InterPro" id="IPR007836">
    <property type="entry name" value="Ribosomal_eS32"/>
</dbReference>
<dbReference type="Pfam" id="PF05162">
    <property type="entry name" value="Ribosomal_L41"/>
    <property type="match status" value="1"/>
</dbReference>
<keyword id="KW-1185">Reference proteome</keyword>
<keyword id="KW-0687">Ribonucleoprotein</keyword>
<keyword id="KW-0689">Ribosomal protein</keyword>
<proteinExistence type="evidence at protein level"/>
<protein>
    <recommendedName>
        <fullName evidence="3">Small ribosomal subunit protein eS32</fullName>
    </recommendedName>
    <alternativeName>
        <fullName>60S ribosomal protein L41</fullName>
    </alternativeName>
    <alternativeName>
        <fullName evidence="2">Large ribosomal subunit protein eL41</fullName>
    </alternativeName>
</protein>
<feature type="chain" id="PRO_0000198069" description="Small ribosomal subunit protein eS32">
    <location>
        <begin position="1"/>
        <end position="25"/>
    </location>
</feature>
<feature type="region of interest" description="Disordered" evidence="1">
    <location>
        <begin position="1"/>
        <end position="25"/>
    </location>
</feature>
<comment type="subunit">
    <text evidence="3">Component of the small ribosomal subunit (Ref.2).</text>
</comment>
<comment type="miscellaneous">
    <text evidence="3">Initially thought to be part of the large ribosomal subunit. Crystal structures show eS32/eL41 to be a small ribosomal subunit forming a bridge at the interface of the 2 subunits.</text>
</comment>
<comment type="similarity">
    <text evidence="2">Belongs to the eukaryotic ribosomal protein eS32 family.</text>
</comment>
<organism>
    <name type="scientific">Glycine max</name>
    <name type="common">Soybean</name>
    <name type="synonym">Glycine hispida</name>
    <dbReference type="NCBI Taxonomy" id="3847"/>
    <lineage>
        <taxon>Eukaryota</taxon>
        <taxon>Viridiplantae</taxon>
        <taxon>Streptophyta</taxon>
        <taxon>Embryophyta</taxon>
        <taxon>Tracheophyta</taxon>
        <taxon>Spermatophyta</taxon>
        <taxon>Magnoliopsida</taxon>
        <taxon>eudicotyledons</taxon>
        <taxon>Gunneridae</taxon>
        <taxon>Pentapetalae</taxon>
        <taxon>rosids</taxon>
        <taxon>fabids</taxon>
        <taxon>Fabales</taxon>
        <taxon>Fabaceae</taxon>
        <taxon>Papilionoideae</taxon>
        <taxon>50 kb inversion clade</taxon>
        <taxon>NPAAA clade</taxon>
        <taxon>indigoferoid/millettioid clade</taxon>
        <taxon>Phaseoleae</taxon>
        <taxon>Glycine</taxon>
        <taxon>Glycine subgen. Soja</taxon>
    </lineage>
</organism>
<name>RS32_SOYBN</name>
<accession>O49224</accession>